<comment type="function">
    <text evidence="1">Catalyzes the strictly specific dephosphorylation of 2'-deoxyribonucleoside 5'-monophosphates.</text>
</comment>
<comment type="catalytic activity">
    <reaction evidence="1">
        <text>a 2'-deoxyribonucleoside 5'-phosphate + H2O = a 2'-deoxyribonucleoside + phosphate</text>
        <dbReference type="Rhea" id="RHEA:36167"/>
        <dbReference type="ChEBI" id="CHEBI:15377"/>
        <dbReference type="ChEBI" id="CHEBI:18274"/>
        <dbReference type="ChEBI" id="CHEBI:43474"/>
        <dbReference type="ChEBI" id="CHEBI:65317"/>
        <dbReference type="EC" id="3.1.3.89"/>
    </reaction>
</comment>
<comment type="cofactor">
    <cofactor evidence="1">
        <name>a divalent metal cation</name>
        <dbReference type="ChEBI" id="CHEBI:60240"/>
    </cofactor>
</comment>
<comment type="subunit">
    <text evidence="1">Homodimer.</text>
</comment>
<comment type="subcellular location">
    <subcellularLocation>
        <location evidence="1">Cytoplasm</location>
    </subcellularLocation>
</comment>
<comment type="similarity">
    <text evidence="1">Belongs to the 5DNU family.</text>
</comment>
<reference key="1">
    <citation type="journal article" date="2009" name="PLoS Genet.">
        <title>Organised genome dynamics in the Escherichia coli species results in highly diverse adaptive paths.</title>
        <authorList>
            <person name="Touchon M."/>
            <person name="Hoede C."/>
            <person name="Tenaillon O."/>
            <person name="Barbe V."/>
            <person name="Baeriswyl S."/>
            <person name="Bidet P."/>
            <person name="Bingen E."/>
            <person name="Bonacorsi S."/>
            <person name="Bouchier C."/>
            <person name="Bouvet O."/>
            <person name="Calteau A."/>
            <person name="Chiapello H."/>
            <person name="Clermont O."/>
            <person name="Cruveiller S."/>
            <person name="Danchin A."/>
            <person name="Diard M."/>
            <person name="Dossat C."/>
            <person name="Karoui M.E."/>
            <person name="Frapy E."/>
            <person name="Garry L."/>
            <person name="Ghigo J.M."/>
            <person name="Gilles A.M."/>
            <person name="Johnson J."/>
            <person name="Le Bouguenec C."/>
            <person name="Lescat M."/>
            <person name="Mangenot S."/>
            <person name="Martinez-Jehanne V."/>
            <person name="Matic I."/>
            <person name="Nassif X."/>
            <person name="Oztas S."/>
            <person name="Petit M.A."/>
            <person name="Pichon C."/>
            <person name="Rouy Z."/>
            <person name="Ruf C.S."/>
            <person name="Schneider D."/>
            <person name="Tourret J."/>
            <person name="Vacherie B."/>
            <person name="Vallenet D."/>
            <person name="Medigue C."/>
            <person name="Rocha E.P.C."/>
            <person name="Denamur E."/>
        </authorList>
    </citation>
    <scope>NUCLEOTIDE SEQUENCE [LARGE SCALE GENOMIC DNA]</scope>
    <source>
        <strain>IAI1</strain>
    </source>
</reference>
<feature type="chain" id="PRO_1000136964" description="5'-deoxynucleotidase YfbR">
    <location>
        <begin position="1"/>
        <end position="199"/>
    </location>
</feature>
<feature type="domain" description="HD" evidence="2">
    <location>
        <begin position="30"/>
        <end position="142"/>
    </location>
</feature>
<feature type="binding site" evidence="1">
    <location>
        <begin position="18"/>
        <end position="19"/>
    </location>
    <ligand>
        <name>substrate</name>
    </ligand>
</feature>
<feature type="binding site" evidence="1">
    <location>
        <position position="33"/>
    </location>
    <ligand>
        <name>a divalent metal cation</name>
        <dbReference type="ChEBI" id="CHEBI:60240"/>
    </ligand>
</feature>
<feature type="binding site" evidence="1">
    <location>
        <position position="33"/>
    </location>
    <ligand>
        <name>substrate</name>
    </ligand>
</feature>
<feature type="binding site" evidence="1">
    <location>
        <position position="68"/>
    </location>
    <ligand>
        <name>a divalent metal cation</name>
        <dbReference type="ChEBI" id="CHEBI:60240"/>
    </ligand>
</feature>
<feature type="binding site" evidence="1">
    <location>
        <position position="69"/>
    </location>
    <ligand>
        <name>a divalent metal cation</name>
        <dbReference type="ChEBI" id="CHEBI:60240"/>
    </ligand>
</feature>
<feature type="binding site" evidence="1">
    <location>
        <position position="69"/>
    </location>
    <ligand>
        <name>substrate</name>
    </ligand>
</feature>
<feature type="binding site" evidence="1">
    <location>
        <begin position="77"/>
        <end position="80"/>
    </location>
    <ligand>
        <name>substrate</name>
    </ligand>
</feature>
<feature type="binding site" evidence="1">
    <location>
        <position position="137"/>
    </location>
    <ligand>
        <name>a divalent metal cation</name>
        <dbReference type="ChEBI" id="CHEBI:60240"/>
    </ligand>
</feature>
<feature type="binding site" evidence="1">
    <location>
        <position position="137"/>
    </location>
    <ligand>
        <name>substrate</name>
    </ligand>
</feature>
<feature type="site" description="Appears to be important in orienting the phosphate for catalysis" evidence="1">
    <location>
        <position position="18"/>
    </location>
</feature>
<gene>
    <name evidence="1" type="primary">yfbR</name>
    <name type="ordered locus">ECIAI1_2365</name>
</gene>
<evidence type="ECO:0000255" key="1">
    <source>
        <dbReference type="HAMAP-Rule" id="MF_01100"/>
    </source>
</evidence>
<evidence type="ECO:0000255" key="2">
    <source>
        <dbReference type="PROSITE-ProRule" id="PRU01175"/>
    </source>
</evidence>
<sequence length="199" mass="22694">MKQSHFFAHLSRLKLINRWPLMRNVRTENVSEHSLQVAMVAHALAAIKNRKFGGNVNAERIALLAMYHDASEVLTGDLPTPVKYFNSQIAQEYKAIEKIAQQKLVDMVPEELRDIFAPLIDEHAYSDEEKSLVKQADALCAYLKCLEELAAGNNEFLLAKTRLEATLEARRSQEMDYFMEVFVPSFHLSLDEISQDSPL</sequence>
<accession>B7M5X0</accession>
<name>5DNU_ECO8A</name>
<keyword id="KW-0963">Cytoplasm</keyword>
<keyword id="KW-0378">Hydrolase</keyword>
<keyword id="KW-0479">Metal-binding</keyword>
<keyword id="KW-0547">Nucleotide-binding</keyword>
<protein>
    <recommendedName>
        <fullName evidence="1">5'-deoxynucleotidase YfbR</fullName>
        <ecNumber evidence="1">3.1.3.89</ecNumber>
    </recommendedName>
    <alternativeName>
        <fullName evidence="1">5'-deoxyribonucleotidase</fullName>
    </alternativeName>
    <alternativeName>
        <fullName evidence="1">Nucleoside 5'-monophosphate phosphohydrolase</fullName>
    </alternativeName>
</protein>
<organism>
    <name type="scientific">Escherichia coli O8 (strain IAI1)</name>
    <dbReference type="NCBI Taxonomy" id="585034"/>
    <lineage>
        <taxon>Bacteria</taxon>
        <taxon>Pseudomonadati</taxon>
        <taxon>Pseudomonadota</taxon>
        <taxon>Gammaproteobacteria</taxon>
        <taxon>Enterobacterales</taxon>
        <taxon>Enterobacteriaceae</taxon>
        <taxon>Escherichia</taxon>
    </lineage>
</organism>
<proteinExistence type="inferred from homology"/>
<dbReference type="EC" id="3.1.3.89" evidence="1"/>
<dbReference type="EMBL" id="CU928160">
    <property type="protein sequence ID" value="CAQ99207.1"/>
    <property type="molecule type" value="Genomic_DNA"/>
</dbReference>
<dbReference type="RefSeq" id="WP_000813860.1">
    <property type="nucleotide sequence ID" value="NC_011741.1"/>
</dbReference>
<dbReference type="SMR" id="B7M5X0"/>
<dbReference type="GeneID" id="93774883"/>
<dbReference type="KEGG" id="ecr:ECIAI1_2365"/>
<dbReference type="HOGENOM" id="CLU_084784_0_0_6"/>
<dbReference type="GO" id="GO:0005737">
    <property type="term" value="C:cytoplasm"/>
    <property type="evidence" value="ECO:0007669"/>
    <property type="project" value="UniProtKB-SubCell"/>
</dbReference>
<dbReference type="GO" id="GO:0002953">
    <property type="term" value="F:5'-deoxynucleotidase activity"/>
    <property type="evidence" value="ECO:0007669"/>
    <property type="project" value="UniProtKB-EC"/>
</dbReference>
<dbReference type="GO" id="GO:0046872">
    <property type="term" value="F:metal ion binding"/>
    <property type="evidence" value="ECO:0007669"/>
    <property type="project" value="UniProtKB-KW"/>
</dbReference>
<dbReference type="GO" id="GO:0000166">
    <property type="term" value="F:nucleotide binding"/>
    <property type="evidence" value="ECO:0007669"/>
    <property type="project" value="UniProtKB-KW"/>
</dbReference>
<dbReference type="CDD" id="cd00077">
    <property type="entry name" value="HDc"/>
    <property type="match status" value="1"/>
</dbReference>
<dbReference type="FunFam" id="1.10.3210.10:FF:000002">
    <property type="entry name" value="Nucleotidase YfbR"/>
    <property type="match status" value="1"/>
</dbReference>
<dbReference type="Gene3D" id="1.10.3210.10">
    <property type="entry name" value="Hypothetical protein af1432"/>
    <property type="match status" value="1"/>
</dbReference>
<dbReference type="HAMAP" id="MF_01100">
    <property type="entry name" value="5DNU"/>
    <property type="match status" value="1"/>
</dbReference>
<dbReference type="InterPro" id="IPR003607">
    <property type="entry name" value="HD/PDEase_dom"/>
</dbReference>
<dbReference type="InterPro" id="IPR006674">
    <property type="entry name" value="HD_domain"/>
</dbReference>
<dbReference type="InterPro" id="IPR022971">
    <property type="entry name" value="YfbR"/>
</dbReference>
<dbReference type="InterPro" id="IPR039356">
    <property type="entry name" value="YfbR/HDDC2"/>
</dbReference>
<dbReference type="NCBIfam" id="NF003009">
    <property type="entry name" value="PRK03826.1"/>
    <property type="match status" value="1"/>
</dbReference>
<dbReference type="PANTHER" id="PTHR11845">
    <property type="entry name" value="5'-DEOXYNUCLEOTIDASE HDDC2"/>
    <property type="match status" value="1"/>
</dbReference>
<dbReference type="PANTHER" id="PTHR11845:SF13">
    <property type="entry name" value="5'-DEOXYNUCLEOTIDASE HDDC2"/>
    <property type="match status" value="1"/>
</dbReference>
<dbReference type="Pfam" id="PF12917">
    <property type="entry name" value="YfbR-like"/>
    <property type="match status" value="1"/>
</dbReference>
<dbReference type="SMART" id="SM00471">
    <property type="entry name" value="HDc"/>
    <property type="match status" value="1"/>
</dbReference>
<dbReference type="SUPFAM" id="SSF109604">
    <property type="entry name" value="HD-domain/PDEase-like"/>
    <property type="match status" value="1"/>
</dbReference>
<dbReference type="PROSITE" id="PS51831">
    <property type="entry name" value="HD"/>
    <property type="match status" value="1"/>
</dbReference>